<proteinExistence type="evidence at protein level"/>
<evidence type="ECO:0000250" key="1"/>
<evidence type="ECO:0000256" key="2">
    <source>
        <dbReference type="SAM" id="MobiDB-lite"/>
    </source>
</evidence>
<evidence type="ECO:0000269" key="3">
    <source>
    </source>
</evidence>
<evidence type="ECO:0000305" key="4"/>
<name>RAE1D_ARATH</name>
<gene>
    <name type="primary">RABE1D</name>
    <name type="synonym">RAB8C</name>
    <name type="ordered locus">At5g03520</name>
    <name type="ORF">F12E4.300</name>
</gene>
<keyword id="KW-0025">Alternative splicing</keyword>
<keyword id="KW-1003">Cell membrane</keyword>
<keyword id="KW-0333">Golgi apparatus</keyword>
<keyword id="KW-0342">GTP-binding</keyword>
<keyword id="KW-0449">Lipoprotein</keyword>
<keyword id="KW-0472">Membrane</keyword>
<keyword id="KW-0547">Nucleotide-binding</keyword>
<keyword id="KW-0636">Prenylation</keyword>
<keyword id="KW-0653">Protein transport</keyword>
<keyword id="KW-1185">Reference proteome</keyword>
<keyword id="KW-0813">Transport</keyword>
<feature type="chain" id="PRO_0000407368" description="Ras-related protein RABE1d">
    <location>
        <begin position="1"/>
        <end position="216"/>
    </location>
</feature>
<feature type="region of interest" description="Disordered" evidence="2">
    <location>
        <begin position="196"/>
        <end position="216"/>
    </location>
</feature>
<feature type="short sequence motif" description="Effector region" evidence="1">
    <location>
        <begin position="44"/>
        <end position="52"/>
    </location>
</feature>
<feature type="compositionally biased region" description="Low complexity" evidence="2">
    <location>
        <begin position="200"/>
        <end position="216"/>
    </location>
</feature>
<feature type="binding site" evidence="1">
    <location>
        <begin position="22"/>
        <end position="29"/>
    </location>
    <ligand>
        <name>GTP</name>
        <dbReference type="ChEBI" id="CHEBI:37565"/>
    </ligand>
</feature>
<feature type="binding site" evidence="1">
    <location>
        <begin position="70"/>
        <end position="74"/>
    </location>
    <ligand>
        <name>GTP</name>
        <dbReference type="ChEBI" id="CHEBI:37565"/>
    </ligand>
</feature>
<feature type="binding site" evidence="1">
    <location>
        <begin position="128"/>
        <end position="131"/>
    </location>
    <ligand>
        <name>GTP</name>
        <dbReference type="ChEBI" id="CHEBI:37565"/>
    </ligand>
</feature>
<feature type="binding site" evidence="1">
    <location>
        <begin position="159"/>
        <end position="160"/>
    </location>
    <ligand>
        <name>GTP</name>
        <dbReference type="ChEBI" id="CHEBI:37565"/>
    </ligand>
</feature>
<feature type="lipid moiety-binding region" description="S-geranylgeranyl cysteine" evidence="1">
    <location>
        <position position="212"/>
    </location>
</feature>
<feature type="lipid moiety-binding region" description="S-geranylgeranyl cysteine" evidence="1">
    <location>
        <position position="213"/>
    </location>
</feature>
<feature type="splice variant" id="VSP_040949" description="In isoform 2." evidence="4">
    <original>AVAPARARSDYDYLIKLLLIGDSGVGKSCLLLRFSDDTFTTSFITTIG</original>
    <variation>ITSSSFFSSAIAVWGRVVCYFDSQMILSLQVSLLPLGI</variation>
    <location>
        <begin position="2"/>
        <end position="49"/>
    </location>
</feature>
<feature type="mutagenesis site" description="Loss of binding to PI5K2." evidence="3">
    <original>S</original>
    <variation>N</variation>
    <location>
        <position position="29"/>
    </location>
</feature>
<feature type="mutagenesis site" description="Increases binding efficiency to PI5K2." evidence="3">
    <original>Q</original>
    <variation>L</variation>
    <location>
        <position position="74"/>
    </location>
</feature>
<feature type="sequence conflict" description="In Ref. 4; AAM64619." evidence="4" ref="4">
    <original>V</original>
    <variation>F</variation>
    <location>
        <position position="121"/>
    </location>
</feature>
<dbReference type="EMBL" id="AL162751">
    <property type="protein sequence ID" value="CAB83313.1"/>
    <property type="molecule type" value="Genomic_DNA"/>
</dbReference>
<dbReference type="EMBL" id="CP002688">
    <property type="protein sequence ID" value="AED90617.1"/>
    <property type="molecule type" value="Genomic_DNA"/>
</dbReference>
<dbReference type="EMBL" id="CP002688">
    <property type="protein sequence ID" value="AED90618.1"/>
    <property type="molecule type" value="Genomic_DNA"/>
</dbReference>
<dbReference type="EMBL" id="AY035124">
    <property type="protein sequence ID" value="AAK59629.1"/>
    <property type="molecule type" value="mRNA"/>
</dbReference>
<dbReference type="EMBL" id="AY056351">
    <property type="protein sequence ID" value="AAL07200.1"/>
    <property type="molecule type" value="mRNA"/>
</dbReference>
<dbReference type="EMBL" id="AY087058">
    <property type="protein sequence ID" value="AAM64619.1"/>
    <property type="molecule type" value="mRNA"/>
</dbReference>
<dbReference type="PIR" id="T48378">
    <property type="entry name" value="T48378"/>
</dbReference>
<dbReference type="RefSeq" id="NP_001031827.1">
    <molecule id="Q9LZD4-2"/>
    <property type="nucleotide sequence ID" value="NM_001036750.1"/>
</dbReference>
<dbReference type="RefSeq" id="NP_195972.1">
    <molecule id="Q9LZD4-1"/>
    <property type="nucleotide sequence ID" value="NM_120432.5"/>
</dbReference>
<dbReference type="SMR" id="Q9LZD4"/>
<dbReference type="BioGRID" id="17093">
    <property type="interactions" value="2"/>
</dbReference>
<dbReference type="FunCoup" id="Q9LZD4">
    <property type="interactions" value="3512"/>
</dbReference>
<dbReference type="IntAct" id="Q9LZD4">
    <property type="interactions" value="1"/>
</dbReference>
<dbReference type="STRING" id="3702.Q9LZD4"/>
<dbReference type="iPTMnet" id="Q9LZD4"/>
<dbReference type="PaxDb" id="3702-AT5G03520.1"/>
<dbReference type="ProteomicsDB" id="236559">
    <molecule id="Q9LZD4-1"/>
</dbReference>
<dbReference type="EnsemblPlants" id="AT5G03520.1">
    <molecule id="Q9LZD4-1"/>
    <property type="protein sequence ID" value="AT5G03520.1"/>
    <property type="gene ID" value="AT5G03520"/>
</dbReference>
<dbReference type="EnsemblPlants" id="AT5G03520.2">
    <molecule id="Q9LZD4-2"/>
    <property type="protein sequence ID" value="AT5G03520.2"/>
    <property type="gene ID" value="AT5G03520"/>
</dbReference>
<dbReference type="GeneID" id="831817"/>
<dbReference type="Gramene" id="AT5G03520.1">
    <molecule id="Q9LZD4-1"/>
    <property type="protein sequence ID" value="AT5G03520.1"/>
    <property type="gene ID" value="AT5G03520"/>
</dbReference>
<dbReference type="Gramene" id="AT5G03520.2">
    <molecule id="Q9LZD4-2"/>
    <property type="protein sequence ID" value="AT5G03520.2"/>
    <property type="gene ID" value="AT5G03520"/>
</dbReference>
<dbReference type="KEGG" id="ath:AT5G03520"/>
<dbReference type="Araport" id="AT5G03520"/>
<dbReference type="TAIR" id="AT5G03520">
    <property type="gene designation" value="RAB8C"/>
</dbReference>
<dbReference type="eggNOG" id="KOG0078">
    <property type="taxonomic scope" value="Eukaryota"/>
</dbReference>
<dbReference type="HOGENOM" id="CLU_041217_10_1_1"/>
<dbReference type="InParanoid" id="Q9LZD4"/>
<dbReference type="OMA" id="CLIVRFS"/>
<dbReference type="OrthoDB" id="9989112at2759"/>
<dbReference type="PhylomeDB" id="Q9LZD4"/>
<dbReference type="PRO" id="PR:Q9LZD4"/>
<dbReference type="Proteomes" id="UP000006548">
    <property type="component" value="Chromosome 5"/>
</dbReference>
<dbReference type="ExpressionAtlas" id="Q9LZD4">
    <property type="expression patterns" value="baseline and differential"/>
</dbReference>
<dbReference type="GO" id="GO:0000139">
    <property type="term" value="C:Golgi membrane"/>
    <property type="evidence" value="ECO:0007669"/>
    <property type="project" value="UniProtKB-SubCell"/>
</dbReference>
<dbReference type="GO" id="GO:0005886">
    <property type="term" value="C:plasma membrane"/>
    <property type="evidence" value="ECO:0007005"/>
    <property type="project" value="TAIR"/>
</dbReference>
<dbReference type="GO" id="GO:0005525">
    <property type="term" value="F:GTP binding"/>
    <property type="evidence" value="ECO:0007669"/>
    <property type="project" value="UniProtKB-KW"/>
</dbReference>
<dbReference type="GO" id="GO:0003924">
    <property type="term" value="F:GTPase activity"/>
    <property type="evidence" value="ECO:0007669"/>
    <property type="project" value="InterPro"/>
</dbReference>
<dbReference type="GO" id="GO:0015031">
    <property type="term" value="P:protein transport"/>
    <property type="evidence" value="ECO:0007669"/>
    <property type="project" value="UniProtKB-KW"/>
</dbReference>
<dbReference type="CDD" id="cd01867">
    <property type="entry name" value="Rab8_Rab10_Rab13_like"/>
    <property type="match status" value="1"/>
</dbReference>
<dbReference type="FunFam" id="3.40.50.300:FF:000308">
    <property type="entry name" value="ras-related protein RABE1c-like"/>
    <property type="match status" value="1"/>
</dbReference>
<dbReference type="Gene3D" id="3.40.50.300">
    <property type="entry name" value="P-loop containing nucleotide triphosphate hydrolases"/>
    <property type="match status" value="1"/>
</dbReference>
<dbReference type="InterPro" id="IPR027417">
    <property type="entry name" value="P-loop_NTPase"/>
</dbReference>
<dbReference type="InterPro" id="IPR005225">
    <property type="entry name" value="Small_GTP-bd"/>
</dbReference>
<dbReference type="InterPro" id="IPR001806">
    <property type="entry name" value="Small_GTPase"/>
</dbReference>
<dbReference type="InterPro" id="IPR050305">
    <property type="entry name" value="Small_GTPase_Rab"/>
</dbReference>
<dbReference type="NCBIfam" id="TIGR00231">
    <property type="entry name" value="small_GTP"/>
    <property type="match status" value="1"/>
</dbReference>
<dbReference type="PANTHER" id="PTHR47980">
    <property type="entry name" value="LD44762P"/>
    <property type="match status" value="1"/>
</dbReference>
<dbReference type="Pfam" id="PF00071">
    <property type="entry name" value="Ras"/>
    <property type="match status" value="1"/>
</dbReference>
<dbReference type="PRINTS" id="PR00449">
    <property type="entry name" value="RASTRNSFRMNG"/>
</dbReference>
<dbReference type="SMART" id="SM00177">
    <property type="entry name" value="ARF"/>
    <property type="match status" value="1"/>
</dbReference>
<dbReference type="SMART" id="SM00175">
    <property type="entry name" value="RAB"/>
    <property type="match status" value="1"/>
</dbReference>
<dbReference type="SMART" id="SM00176">
    <property type="entry name" value="RAN"/>
    <property type="match status" value="1"/>
</dbReference>
<dbReference type="SMART" id="SM00173">
    <property type="entry name" value="RAS"/>
    <property type="match status" value="1"/>
</dbReference>
<dbReference type="SMART" id="SM00174">
    <property type="entry name" value="RHO"/>
    <property type="match status" value="1"/>
</dbReference>
<dbReference type="SUPFAM" id="SSF52540">
    <property type="entry name" value="P-loop containing nucleoside triphosphate hydrolases"/>
    <property type="match status" value="1"/>
</dbReference>
<dbReference type="PROSITE" id="PS51419">
    <property type="entry name" value="RAB"/>
    <property type="match status" value="1"/>
</dbReference>
<protein>
    <recommendedName>
        <fullName>Ras-related protein RABE1d</fullName>
        <shortName>AtRABE1d</shortName>
    </recommendedName>
    <alternativeName>
        <fullName>Ras-related protein Rab8C</fullName>
        <shortName>AtRab8C</shortName>
    </alternativeName>
</protein>
<accession>Q9LZD4</accession>
<accession>Q2V3A4</accession>
<accession>Q8LBQ4</accession>
<reference key="1">
    <citation type="journal article" date="2000" name="Nature">
        <title>Sequence and analysis of chromosome 5 of the plant Arabidopsis thaliana.</title>
        <authorList>
            <person name="Tabata S."/>
            <person name="Kaneko T."/>
            <person name="Nakamura Y."/>
            <person name="Kotani H."/>
            <person name="Kato T."/>
            <person name="Asamizu E."/>
            <person name="Miyajima N."/>
            <person name="Sasamoto S."/>
            <person name="Kimura T."/>
            <person name="Hosouchi T."/>
            <person name="Kawashima K."/>
            <person name="Kohara M."/>
            <person name="Matsumoto M."/>
            <person name="Matsuno A."/>
            <person name="Muraki A."/>
            <person name="Nakayama S."/>
            <person name="Nakazaki N."/>
            <person name="Naruo K."/>
            <person name="Okumura S."/>
            <person name="Shinpo S."/>
            <person name="Takeuchi C."/>
            <person name="Wada T."/>
            <person name="Watanabe A."/>
            <person name="Yamada M."/>
            <person name="Yasuda M."/>
            <person name="Sato S."/>
            <person name="de la Bastide M."/>
            <person name="Huang E."/>
            <person name="Spiegel L."/>
            <person name="Gnoj L."/>
            <person name="O'Shaughnessy A."/>
            <person name="Preston R."/>
            <person name="Habermann K."/>
            <person name="Murray J."/>
            <person name="Johnson D."/>
            <person name="Rohlfing T."/>
            <person name="Nelson J."/>
            <person name="Stoneking T."/>
            <person name="Pepin K."/>
            <person name="Spieth J."/>
            <person name="Sekhon M."/>
            <person name="Armstrong J."/>
            <person name="Becker M."/>
            <person name="Belter E."/>
            <person name="Cordum H."/>
            <person name="Cordes M."/>
            <person name="Courtney L."/>
            <person name="Courtney W."/>
            <person name="Dante M."/>
            <person name="Du H."/>
            <person name="Edwards J."/>
            <person name="Fryman J."/>
            <person name="Haakensen B."/>
            <person name="Lamar E."/>
            <person name="Latreille P."/>
            <person name="Leonard S."/>
            <person name="Meyer R."/>
            <person name="Mulvaney E."/>
            <person name="Ozersky P."/>
            <person name="Riley A."/>
            <person name="Strowmatt C."/>
            <person name="Wagner-McPherson C."/>
            <person name="Wollam A."/>
            <person name="Yoakum M."/>
            <person name="Bell M."/>
            <person name="Dedhia N."/>
            <person name="Parnell L."/>
            <person name="Shah R."/>
            <person name="Rodriguez M."/>
            <person name="Hoon See L."/>
            <person name="Vil D."/>
            <person name="Baker J."/>
            <person name="Kirchoff K."/>
            <person name="Toth K."/>
            <person name="King L."/>
            <person name="Bahret A."/>
            <person name="Miller B."/>
            <person name="Marra M.A."/>
            <person name="Martienssen R."/>
            <person name="McCombie W.R."/>
            <person name="Wilson R.K."/>
            <person name="Murphy G."/>
            <person name="Bancroft I."/>
            <person name="Volckaert G."/>
            <person name="Wambutt R."/>
            <person name="Duesterhoeft A."/>
            <person name="Stiekema W."/>
            <person name="Pohl T."/>
            <person name="Entian K.-D."/>
            <person name="Terryn N."/>
            <person name="Hartley N."/>
            <person name="Bent E."/>
            <person name="Johnson S."/>
            <person name="Langham S.-A."/>
            <person name="McCullagh B."/>
            <person name="Robben J."/>
            <person name="Grymonprez B."/>
            <person name="Zimmermann W."/>
            <person name="Ramsperger U."/>
            <person name="Wedler H."/>
            <person name="Balke K."/>
            <person name="Wedler E."/>
            <person name="Peters S."/>
            <person name="van Staveren M."/>
            <person name="Dirkse W."/>
            <person name="Mooijman P."/>
            <person name="Klein Lankhorst R."/>
            <person name="Weitzenegger T."/>
            <person name="Bothe G."/>
            <person name="Rose M."/>
            <person name="Hauf J."/>
            <person name="Berneiser S."/>
            <person name="Hempel S."/>
            <person name="Feldpausch M."/>
            <person name="Lamberth S."/>
            <person name="Villarroel R."/>
            <person name="Gielen J."/>
            <person name="Ardiles W."/>
            <person name="Bents O."/>
            <person name="Lemcke K."/>
            <person name="Kolesov G."/>
            <person name="Mayer K.F.X."/>
            <person name="Rudd S."/>
            <person name="Schoof H."/>
            <person name="Schueller C."/>
            <person name="Zaccaria P."/>
            <person name="Mewes H.-W."/>
            <person name="Bevan M."/>
            <person name="Fransz P.F."/>
        </authorList>
    </citation>
    <scope>NUCLEOTIDE SEQUENCE [LARGE SCALE GENOMIC DNA]</scope>
    <source>
        <strain>cv. Columbia</strain>
    </source>
</reference>
<reference key="2">
    <citation type="journal article" date="2017" name="Plant J.">
        <title>Araport11: a complete reannotation of the Arabidopsis thaliana reference genome.</title>
        <authorList>
            <person name="Cheng C.Y."/>
            <person name="Krishnakumar V."/>
            <person name="Chan A.P."/>
            <person name="Thibaud-Nissen F."/>
            <person name="Schobel S."/>
            <person name="Town C.D."/>
        </authorList>
    </citation>
    <scope>GENOME REANNOTATION</scope>
    <source>
        <strain>cv. Columbia</strain>
    </source>
</reference>
<reference key="3">
    <citation type="journal article" date="2003" name="Science">
        <title>Empirical analysis of transcriptional activity in the Arabidopsis genome.</title>
        <authorList>
            <person name="Yamada K."/>
            <person name="Lim J."/>
            <person name="Dale J.M."/>
            <person name="Chen H."/>
            <person name="Shinn P."/>
            <person name="Palm C.J."/>
            <person name="Southwick A.M."/>
            <person name="Wu H.C."/>
            <person name="Kim C.J."/>
            <person name="Nguyen M."/>
            <person name="Pham P.K."/>
            <person name="Cheuk R.F."/>
            <person name="Karlin-Newmann G."/>
            <person name="Liu S.X."/>
            <person name="Lam B."/>
            <person name="Sakano H."/>
            <person name="Wu T."/>
            <person name="Yu G."/>
            <person name="Miranda M."/>
            <person name="Quach H.L."/>
            <person name="Tripp M."/>
            <person name="Chang C.H."/>
            <person name="Lee J.M."/>
            <person name="Toriumi M.J."/>
            <person name="Chan M.M."/>
            <person name="Tang C.C."/>
            <person name="Onodera C.S."/>
            <person name="Deng J.M."/>
            <person name="Akiyama K."/>
            <person name="Ansari Y."/>
            <person name="Arakawa T."/>
            <person name="Banh J."/>
            <person name="Banno F."/>
            <person name="Bowser L."/>
            <person name="Brooks S.Y."/>
            <person name="Carninci P."/>
            <person name="Chao Q."/>
            <person name="Choy N."/>
            <person name="Enju A."/>
            <person name="Goldsmith A.D."/>
            <person name="Gurjal M."/>
            <person name="Hansen N.F."/>
            <person name="Hayashizaki Y."/>
            <person name="Johnson-Hopson C."/>
            <person name="Hsuan V.W."/>
            <person name="Iida K."/>
            <person name="Karnes M."/>
            <person name="Khan S."/>
            <person name="Koesema E."/>
            <person name="Ishida J."/>
            <person name="Jiang P.X."/>
            <person name="Jones T."/>
            <person name="Kawai J."/>
            <person name="Kamiya A."/>
            <person name="Meyers C."/>
            <person name="Nakajima M."/>
            <person name="Narusaka M."/>
            <person name="Seki M."/>
            <person name="Sakurai T."/>
            <person name="Satou M."/>
            <person name="Tamse R."/>
            <person name="Vaysberg M."/>
            <person name="Wallender E.K."/>
            <person name="Wong C."/>
            <person name="Yamamura Y."/>
            <person name="Yuan S."/>
            <person name="Shinozaki K."/>
            <person name="Davis R.W."/>
            <person name="Theologis A."/>
            <person name="Ecker J.R."/>
        </authorList>
    </citation>
    <scope>NUCLEOTIDE SEQUENCE [LARGE SCALE MRNA] (ISOFORM 1)</scope>
    <source>
        <strain>cv. Columbia</strain>
    </source>
</reference>
<reference key="4">
    <citation type="submission" date="2002-03" db="EMBL/GenBank/DDBJ databases">
        <title>Full-length cDNA from Arabidopsis thaliana.</title>
        <authorList>
            <person name="Brover V.V."/>
            <person name="Troukhan M.E."/>
            <person name="Alexandrov N.A."/>
            <person name="Lu Y.-P."/>
            <person name="Flavell R.B."/>
            <person name="Feldmann K.A."/>
        </authorList>
    </citation>
    <scope>NUCLEOTIDE SEQUENCE [LARGE SCALE MRNA] (ISOFORM 1)</scope>
</reference>
<reference key="5">
    <citation type="journal article" date="2003" name="Plant Physiol.">
        <title>Analysis of the small GTPase gene superfamily of Arabidopsis.</title>
        <authorList>
            <person name="Vernoud V."/>
            <person name="Horton A.C."/>
            <person name="Yang Z."/>
            <person name="Nielsen E."/>
        </authorList>
    </citation>
    <scope>GENE FAMILY</scope>
    <scope>NOMENCLATURE</scope>
</reference>
<reference key="6">
    <citation type="journal article" date="2009" name="J. Cell Sci.">
        <title>Arabidopsis Rab-E GTPases exhibit a novel interaction with a plasma-membrane phosphatidylinositol-4-phosphate 5-kinase.</title>
        <authorList>
            <person name="Camacho L."/>
            <person name="Smertenko A.P."/>
            <person name="Perez-Gomez J."/>
            <person name="Hussey P.J."/>
            <person name="Moore I."/>
        </authorList>
    </citation>
    <scope>INTERACTION WITH PI5K2</scope>
    <scope>MUTAGENESIS OF SER-29 AND GLN-74</scope>
</reference>
<comment type="function">
    <text evidence="1">Involved in membrane trafficking from the Golgi to the plasma membrane.</text>
</comment>
<comment type="subunit">
    <text evidence="3">Interacts with PI5K2.</text>
</comment>
<comment type="interaction">
    <interactant intactId="EBI-25518674">
        <id>Q9LZD4</id>
    </interactant>
    <interactant intactId="EBI-4425250">
        <id>Q8LA96</id>
        <label>BPL1</label>
    </interactant>
    <organismsDiffer>false</organismsDiffer>
    <experiments>3</experiments>
</comment>
<comment type="subcellular location">
    <subcellularLocation>
        <location>Golgi apparatus membrane</location>
    </subcellularLocation>
    <subcellularLocation>
        <location evidence="4">Cell membrane</location>
        <topology evidence="4">Lipid-anchor</topology>
    </subcellularLocation>
</comment>
<comment type="alternative products">
    <event type="alternative splicing"/>
    <isoform>
        <id>Q9LZD4-1</id>
        <name>1</name>
        <sequence type="displayed"/>
    </isoform>
    <isoform>
        <id>Q9LZD4-2</id>
        <name>2</name>
        <sequence type="described" ref="VSP_040949"/>
    </isoform>
</comment>
<comment type="similarity">
    <text evidence="4">Belongs to the small GTPase superfamily. Rab family.</text>
</comment>
<organism>
    <name type="scientific">Arabidopsis thaliana</name>
    <name type="common">Mouse-ear cress</name>
    <dbReference type="NCBI Taxonomy" id="3702"/>
    <lineage>
        <taxon>Eukaryota</taxon>
        <taxon>Viridiplantae</taxon>
        <taxon>Streptophyta</taxon>
        <taxon>Embryophyta</taxon>
        <taxon>Tracheophyta</taxon>
        <taxon>Spermatophyta</taxon>
        <taxon>Magnoliopsida</taxon>
        <taxon>eudicotyledons</taxon>
        <taxon>Gunneridae</taxon>
        <taxon>Pentapetalae</taxon>
        <taxon>rosids</taxon>
        <taxon>malvids</taxon>
        <taxon>Brassicales</taxon>
        <taxon>Brassicaceae</taxon>
        <taxon>Camelineae</taxon>
        <taxon>Arabidopsis</taxon>
    </lineage>
</organism>
<sequence length="216" mass="24037">MAVAPARARSDYDYLIKLLLIGDSGVGKSCLLLRFSDDTFTTSFITTIGIDFKIRTVELDGKRIKLQIWDTAGQERFRTITTAYYRGAMGILLVYDVTDESSFNNIRNWMKNIEQHASDNVNKILVGNKADMDESKRAVPTAKGQALADEYGIKFFETSAKTNLNVENVFMSIAKDIKQRLTETDTKAEPQGIKITKQDTAASSSTAEKSACCSYV</sequence>